<reference key="1">
    <citation type="journal article" date="2007" name="PLoS Genet.">
        <title>Patterns and implications of gene gain and loss in the evolution of Prochlorococcus.</title>
        <authorList>
            <person name="Kettler G.C."/>
            <person name="Martiny A.C."/>
            <person name="Huang K."/>
            <person name="Zucker J."/>
            <person name="Coleman M.L."/>
            <person name="Rodrigue S."/>
            <person name="Chen F."/>
            <person name="Lapidus A."/>
            <person name="Ferriera S."/>
            <person name="Johnson J."/>
            <person name="Steglich C."/>
            <person name="Church G.M."/>
            <person name="Richardson P."/>
            <person name="Chisholm S.W."/>
        </authorList>
    </citation>
    <scope>NUCLEOTIDE SEQUENCE [LARGE SCALE GENOMIC DNA]</scope>
    <source>
        <strain>MIT 9215</strain>
    </source>
</reference>
<organism>
    <name type="scientific">Prochlorococcus marinus (strain MIT 9215)</name>
    <dbReference type="NCBI Taxonomy" id="93060"/>
    <lineage>
        <taxon>Bacteria</taxon>
        <taxon>Bacillati</taxon>
        <taxon>Cyanobacteriota</taxon>
        <taxon>Cyanophyceae</taxon>
        <taxon>Synechococcales</taxon>
        <taxon>Prochlorococcaceae</taxon>
        <taxon>Prochlorococcus</taxon>
    </lineage>
</organism>
<keyword id="KW-0030">Aminoacyl-tRNA synthetase</keyword>
<keyword id="KW-0067">ATP-binding</keyword>
<keyword id="KW-0963">Cytoplasm</keyword>
<keyword id="KW-0436">Ligase</keyword>
<keyword id="KW-0547">Nucleotide-binding</keyword>
<keyword id="KW-0648">Protein biosynthesis</keyword>
<accession>A8G7J3</accession>
<dbReference type="EC" id="6.1.1.23" evidence="1"/>
<dbReference type="EMBL" id="CP000825">
    <property type="protein sequence ID" value="ABV51574.1"/>
    <property type="molecule type" value="Genomic_DNA"/>
</dbReference>
<dbReference type="RefSeq" id="WP_012008561.1">
    <property type="nucleotide sequence ID" value="NC_009840.1"/>
</dbReference>
<dbReference type="SMR" id="A8G7J3"/>
<dbReference type="STRING" id="93060.P9215_19611"/>
<dbReference type="KEGG" id="pmh:P9215_19611"/>
<dbReference type="eggNOG" id="COG0173">
    <property type="taxonomic scope" value="Bacteria"/>
</dbReference>
<dbReference type="HOGENOM" id="CLU_014330_3_2_3"/>
<dbReference type="OrthoDB" id="9802326at2"/>
<dbReference type="Proteomes" id="UP000002014">
    <property type="component" value="Chromosome"/>
</dbReference>
<dbReference type="GO" id="GO:0005737">
    <property type="term" value="C:cytoplasm"/>
    <property type="evidence" value="ECO:0007669"/>
    <property type="project" value="UniProtKB-SubCell"/>
</dbReference>
<dbReference type="GO" id="GO:0004815">
    <property type="term" value="F:aspartate-tRNA ligase activity"/>
    <property type="evidence" value="ECO:0007669"/>
    <property type="project" value="UniProtKB-UniRule"/>
</dbReference>
<dbReference type="GO" id="GO:0050560">
    <property type="term" value="F:aspartate-tRNA(Asn) ligase activity"/>
    <property type="evidence" value="ECO:0007669"/>
    <property type="project" value="UniProtKB-EC"/>
</dbReference>
<dbReference type="GO" id="GO:0005524">
    <property type="term" value="F:ATP binding"/>
    <property type="evidence" value="ECO:0007669"/>
    <property type="project" value="UniProtKB-UniRule"/>
</dbReference>
<dbReference type="GO" id="GO:0003676">
    <property type="term" value="F:nucleic acid binding"/>
    <property type="evidence" value="ECO:0007669"/>
    <property type="project" value="InterPro"/>
</dbReference>
<dbReference type="GO" id="GO:0006422">
    <property type="term" value="P:aspartyl-tRNA aminoacylation"/>
    <property type="evidence" value="ECO:0007669"/>
    <property type="project" value="UniProtKB-UniRule"/>
</dbReference>
<dbReference type="CDD" id="cd00777">
    <property type="entry name" value="AspRS_core"/>
    <property type="match status" value="1"/>
</dbReference>
<dbReference type="CDD" id="cd04317">
    <property type="entry name" value="EcAspRS_like_N"/>
    <property type="match status" value="1"/>
</dbReference>
<dbReference type="Gene3D" id="3.30.930.10">
    <property type="entry name" value="Bira Bifunctional Protein, Domain 2"/>
    <property type="match status" value="1"/>
</dbReference>
<dbReference type="Gene3D" id="3.30.1360.30">
    <property type="entry name" value="GAD-like domain"/>
    <property type="match status" value="1"/>
</dbReference>
<dbReference type="Gene3D" id="2.40.50.140">
    <property type="entry name" value="Nucleic acid-binding proteins"/>
    <property type="match status" value="1"/>
</dbReference>
<dbReference type="HAMAP" id="MF_00044">
    <property type="entry name" value="Asp_tRNA_synth_type1"/>
    <property type="match status" value="1"/>
</dbReference>
<dbReference type="InterPro" id="IPR004364">
    <property type="entry name" value="Aa-tRNA-synt_II"/>
</dbReference>
<dbReference type="InterPro" id="IPR006195">
    <property type="entry name" value="aa-tRNA-synth_II"/>
</dbReference>
<dbReference type="InterPro" id="IPR045864">
    <property type="entry name" value="aa-tRNA-synth_II/BPL/LPL"/>
</dbReference>
<dbReference type="InterPro" id="IPR004524">
    <property type="entry name" value="Asp-tRNA-ligase_1"/>
</dbReference>
<dbReference type="InterPro" id="IPR047089">
    <property type="entry name" value="Asp-tRNA-ligase_1_N"/>
</dbReference>
<dbReference type="InterPro" id="IPR002312">
    <property type="entry name" value="Asp/Asn-tRNA-synth_IIb"/>
</dbReference>
<dbReference type="InterPro" id="IPR047090">
    <property type="entry name" value="AspRS_core"/>
</dbReference>
<dbReference type="InterPro" id="IPR004115">
    <property type="entry name" value="GAD-like_sf"/>
</dbReference>
<dbReference type="InterPro" id="IPR029351">
    <property type="entry name" value="GAD_dom"/>
</dbReference>
<dbReference type="InterPro" id="IPR012340">
    <property type="entry name" value="NA-bd_OB-fold"/>
</dbReference>
<dbReference type="InterPro" id="IPR004365">
    <property type="entry name" value="NA-bd_OB_tRNA"/>
</dbReference>
<dbReference type="NCBIfam" id="TIGR00459">
    <property type="entry name" value="aspS_bact"/>
    <property type="match status" value="1"/>
</dbReference>
<dbReference type="NCBIfam" id="NF001750">
    <property type="entry name" value="PRK00476.1"/>
    <property type="match status" value="1"/>
</dbReference>
<dbReference type="PANTHER" id="PTHR22594:SF5">
    <property type="entry name" value="ASPARTATE--TRNA LIGASE, MITOCHONDRIAL"/>
    <property type="match status" value="1"/>
</dbReference>
<dbReference type="PANTHER" id="PTHR22594">
    <property type="entry name" value="ASPARTYL/LYSYL-TRNA SYNTHETASE"/>
    <property type="match status" value="1"/>
</dbReference>
<dbReference type="Pfam" id="PF02938">
    <property type="entry name" value="GAD"/>
    <property type="match status" value="1"/>
</dbReference>
<dbReference type="Pfam" id="PF00152">
    <property type="entry name" value="tRNA-synt_2"/>
    <property type="match status" value="1"/>
</dbReference>
<dbReference type="Pfam" id="PF01336">
    <property type="entry name" value="tRNA_anti-codon"/>
    <property type="match status" value="1"/>
</dbReference>
<dbReference type="PRINTS" id="PR01042">
    <property type="entry name" value="TRNASYNTHASP"/>
</dbReference>
<dbReference type="SUPFAM" id="SSF55681">
    <property type="entry name" value="Class II aaRS and biotin synthetases"/>
    <property type="match status" value="1"/>
</dbReference>
<dbReference type="SUPFAM" id="SSF55261">
    <property type="entry name" value="GAD domain-like"/>
    <property type="match status" value="1"/>
</dbReference>
<dbReference type="SUPFAM" id="SSF50249">
    <property type="entry name" value="Nucleic acid-binding proteins"/>
    <property type="match status" value="1"/>
</dbReference>
<dbReference type="PROSITE" id="PS50862">
    <property type="entry name" value="AA_TRNA_LIGASE_II"/>
    <property type="match status" value="1"/>
</dbReference>
<protein>
    <recommendedName>
        <fullName evidence="1">Aspartate--tRNA(Asp/Asn) ligase</fullName>
        <ecNumber evidence="1">6.1.1.23</ecNumber>
    </recommendedName>
    <alternativeName>
        <fullName evidence="1">Aspartyl-tRNA synthetase</fullName>
        <shortName evidence="1">AspRS</shortName>
    </alternativeName>
    <alternativeName>
        <fullName evidence="1">Non-discriminating aspartyl-tRNA synthetase</fullName>
        <shortName evidence="1">ND-AspRS</shortName>
    </alternativeName>
</protein>
<evidence type="ECO:0000255" key="1">
    <source>
        <dbReference type="HAMAP-Rule" id="MF_00044"/>
    </source>
</evidence>
<name>SYDND_PROM2</name>
<sequence length="598" mass="67588">MRNKICKELNNTDIGKLVNLCGWVDRRRDHGGVIFIDLRDHSGFLQITINPDDGADLFKQAETLRNETVIMVSGIINERPKDSINTNLSTGELELKVKDLQVLNQIKNNLPFPVSIHDYENTKEELRLKYRYLDLRRGKLLENLKTRHKIIKVSREFLDNFGFTEVETPLLTKSTPEGARDFLVPARLSNGEFFALPQSPQLFKQLLMVGGLDKYYQIAKCFRDEDLRADRQPEFTQLDIEMSFVSEEEIISFNESLIKKIWKEVLNINFNNAFPRMSWQAAMDNYGTDRPDTRYEMLLKDLGGVLGDIGFNIFTKAIKAGGYIKSITVKGGNSSISNVRIKPGGDIFQVAQDAGAGGLAFIRVKGDELETIGAIKNNLSEEHIADILKITEAKDGDLILLGAGDKQIVNQSLDRVRQYIAKDLNLIDKSKWNFLWVTDFPMFERNEDENRYEALHHPFCSPKNIKSKDSDKMQKEIENSIANAYDLVLNGMELGGGSLRIHEANLQREVLKTVGLTDKEIDEKFGFLIEALEMGAPPHGGIAFGLDRITMLLIGADSIRETIAFPKNQQAKCLLTNAPSNVSESQLKELDIEITIDE</sequence>
<gene>
    <name evidence="1" type="primary">aspS</name>
    <name type="ordered locus">P9215_19611</name>
</gene>
<proteinExistence type="inferred from homology"/>
<feature type="chain" id="PRO_1000057305" description="Aspartate--tRNA(Asp/Asn) ligase">
    <location>
        <begin position="1"/>
        <end position="598"/>
    </location>
</feature>
<feature type="region of interest" description="Aspartate" evidence="1">
    <location>
        <begin position="201"/>
        <end position="204"/>
    </location>
</feature>
<feature type="binding site" evidence="1">
    <location>
        <position position="177"/>
    </location>
    <ligand>
        <name>L-aspartate</name>
        <dbReference type="ChEBI" id="CHEBI:29991"/>
    </ligand>
</feature>
<feature type="binding site" evidence="1">
    <location>
        <begin position="223"/>
        <end position="225"/>
    </location>
    <ligand>
        <name>ATP</name>
        <dbReference type="ChEBI" id="CHEBI:30616"/>
    </ligand>
</feature>
<feature type="binding site" evidence="1">
    <location>
        <position position="223"/>
    </location>
    <ligand>
        <name>L-aspartate</name>
        <dbReference type="ChEBI" id="CHEBI:29991"/>
    </ligand>
</feature>
<feature type="binding site" evidence="1">
    <location>
        <position position="232"/>
    </location>
    <ligand>
        <name>ATP</name>
        <dbReference type="ChEBI" id="CHEBI:30616"/>
    </ligand>
</feature>
<feature type="binding site" evidence="1">
    <location>
        <position position="456"/>
    </location>
    <ligand>
        <name>L-aspartate</name>
        <dbReference type="ChEBI" id="CHEBI:29991"/>
    </ligand>
</feature>
<feature type="binding site" evidence="1">
    <location>
        <position position="493"/>
    </location>
    <ligand>
        <name>ATP</name>
        <dbReference type="ChEBI" id="CHEBI:30616"/>
    </ligand>
</feature>
<feature type="binding site" evidence="1">
    <location>
        <position position="500"/>
    </location>
    <ligand>
        <name>L-aspartate</name>
        <dbReference type="ChEBI" id="CHEBI:29991"/>
    </ligand>
</feature>
<feature type="binding site" evidence="1">
    <location>
        <begin position="545"/>
        <end position="548"/>
    </location>
    <ligand>
        <name>ATP</name>
        <dbReference type="ChEBI" id="CHEBI:30616"/>
    </ligand>
</feature>
<feature type="site" description="Important for tRNA non-discrimination" evidence="1">
    <location>
        <position position="30"/>
    </location>
</feature>
<comment type="function">
    <text evidence="1">Aspartyl-tRNA synthetase with relaxed tRNA specificity since it is able to aspartylate not only its cognate tRNA(Asp) but also tRNA(Asn). Reaction proceeds in two steps: L-aspartate is first activated by ATP to form Asp-AMP and then transferred to the acceptor end of tRNA(Asp/Asn).</text>
</comment>
<comment type="catalytic activity">
    <reaction evidence="1">
        <text>tRNA(Asx) + L-aspartate + ATP = L-aspartyl-tRNA(Asx) + AMP + diphosphate</text>
        <dbReference type="Rhea" id="RHEA:18349"/>
        <dbReference type="Rhea" id="RHEA-COMP:9710"/>
        <dbReference type="Rhea" id="RHEA-COMP:9711"/>
        <dbReference type="ChEBI" id="CHEBI:29991"/>
        <dbReference type="ChEBI" id="CHEBI:30616"/>
        <dbReference type="ChEBI" id="CHEBI:33019"/>
        <dbReference type="ChEBI" id="CHEBI:78442"/>
        <dbReference type="ChEBI" id="CHEBI:78516"/>
        <dbReference type="ChEBI" id="CHEBI:456215"/>
        <dbReference type="EC" id="6.1.1.23"/>
    </reaction>
</comment>
<comment type="subunit">
    <text evidence="1">Homodimer.</text>
</comment>
<comment type="subcellular location">
    <subcellularLocation>
        <location evidence="1">Cytoplasm</location>
    </subcellularLocation>
</comment>
<comment type="similarity">
    <text evidence="1">Belongs to the class-II aminoacyl-tRNA synthetase family. Type 1 subfamily.</text>
</comment>